<protein>
    <recommendedName>
        <fullName evidence="1">tRNA-splicing endonuclease</fullName>
        <ecNumber evidence="1">4.6.1.16</ecNumber>
    </recommendedName>
    <alternativeName>
        <fullName evidence="1">tRNA-intron endonuclease</fullName>
    </alternativeName>
</protein>
<evidence type="ECO:0000255" key="1">
    <source>
        <dbReference type="HAMAP-Rule" id="MF_01833"/>
    </source>
</evidence>
<sequence length="170" mass="20360">MKKVIEFYLSGDRVYSTREKAINQLYNNRGYGELKGNKLFLSLIEAAYLVERGWIKVLDEDRELTFEEIFKLGKRKDEDFDIKYLVYKDLRDRGYIVKSALKFGSHFRVYRKNAEHSDWLIWVLRESEKLSPNDMTARVRVAHGVRKNMVMAIVDEDNDVVYYKIEWIKF</sequence>
<organism>
    <name type="scientific">Pyrococcus abyssi (strain GE5 / Orsay)</name>
    <dbReference type="NCBI Taxonomy" id="272844"/>
    <lineage>
        <taxon>Archaea</taxon>
        <taxon>Methanobacteriati</taxon>
        <taxon>Methanobacteriota</taxon>
        <taxon>Thermococci</taxon>
        <taxon>Thermococcales</taxon>
        <taxon>Thermococcaceae</taxon>
        <taxon>Pyrococcus</taxon>
    </lineage>
</organism>
<keyword id="KW-0456">Lyase</keyword>
<keyword id="KW-0819">tRNA processing</keyword>
<comment type="function">
    <text evidence="1">Endonuclease that removes tRNA introns. Cleaves pre-tRNA at the 5'- and 3'-splice sites to release the intron. The products are an intron and two tRNA half-molecules bearing 2',3' cyclic phosphate and 5'-OH termini. Recognizes a pseudosymmetric substrate in which 2 bulged loops of 3 bases are separated by a stem of 4 bp.</text>
</comment>
<comment type="catalytic activity">
    <reaction evidence="1">
        <text>pretRNA = a 3'-half-tRNA molecule with a 5'-OH end + a 5'-half-tRNA molecule with a 2',3'-cyclic phosphate end + an intron with a 2',3'-cyclic phosphate and a 5'-hydroxyl terminus.</text>
        <dbReference type="EC" id="4.6.1.16"/>
    </reaction>
</comment>
<comment type="subunit">
    <text evidence="1">Homotetramer; although the tetramer contains four active sites, only two participate in the cleavage. Therefore, it should be considered as a dimer of dimers.</text>
</comment>
<comment type="similarity">
    <text evidence="1">Belongs to the tRNA-intron endonuclease family. Archaeal short subfamily.</text>
</comment>
<accession>Q9UY33</accession>
<accession>G8ZK36</accession>
<proteinExistence type="inferred from homology"/>
<reference key="1">
    <citation type="journal article" date="2003" name="Mol. Microbiol.">
        <title>An integrated analysis of the genome of the hyperthermophilic archaeon Pyrococcus abyssi.</title>
        <authorList>
            <person name="Cohen G.N."/>
            <person name="Barbe V."/>
            <person name="Flament D."/>
            <person name="Galperin M."/>
            <person name="Heilig R."/>
            <person name="Lecompte O."/>
            <person name="Poch O."/>
            <person name="Prieur D."/>
            <person name="Querellou J."/>
            <person name="Ripp R."/>
            <person name="Thierry J.-C."/>
            <person name="Van der Oost J."/>
            <person name="Weissenbach J."/>
            <person name="Zivanovic Y."/>
            <person name="Forterre P."/>
        </authorList>
    </citation>
    <scope>NUCLEOTIDE SEQUENCE [LARGE SCALE GENOMIC DNA]</scope>
    <source>
        <strain>GE5 / Orsay</strain>
    </source>
</reference>
<reference key="2">
    <citation type="journal article" date="2012" name="Curr. Microbiol.">
        <title>Re-annotation of two hyperthermophilic archaea Pyrococcus abyssi GE5 and Pyrococcus furiosus DSM 3638.</title>
        <authorList>
            <person name="Gao J."/>
            <person name="Wang J."/>
        </authorList>
    </citation>
    <scope>GENOME REANNOTATION</scope>
    <source>
        <strain>GE5 / Orsay</strain>
    </source>
</reference>
<dbReference type="EC" id="4.6.1.16" evidence="1"/>
<dbReference type="EMBL" id="AJ248288">
    <property type="protein sequence ID" value="CAB50579.1"/>
    <property type="molecule type" value="Genomic_DNA"/>
</dbReference>
<dbReference type="EMBL" id="HE613800">
    <property type="protein sequence ID" value="CCE71143.1"/>
    <property type="molecule type" value="Genomic_DNA"/>
</dbReference>
<dbReference type="PIR" id="E75017">
    <property type="entry name" value="E75017"/>
</dbReference>
<dbReference type="RefSeq" id="WP_010868793.1">
    <property type="nucleotide sequence ID" value="NC_000868.1"/>
</dbReference>
<dbReference type="SMR" id="Q9UY33"/>
<dbReference type="STRING" id="272844.PAB1099"/>
<dbReference type="KEGG" id="pab:PAB1099"/>
<dbReference type="PATRIC" id="fig|272844.11.peg.1789"/>
<dbReference type="eggNOG" id="arCOG01701">
    <property type="taxonomic scope" value="Archaea"/>
</dbReference>
<dbReference type="HOGENOM" id="CLU_114393_0_0_2"/>
<dbReference type="OrthoDB" id="46045at2157"/>
<dbReference type="PhylomeDB" id="Q9UY33"/>
<dbReference type="Proteomes" id="UP000000810">
    <property type="component" value="Chromosome"/>
</dbReference>
<dbReference type="Proteomes" id="UP000009139">
    <property type="component" value="Chromosome"/>
</dbReference>
<dbReference type="GO" id="GO:0005737">
    <property type="term" value="C:cytoplasm"/>
    <property type="evidence" value="ECO:0007669"/>
    <property type="project" value="TreeGrafter"/>
</dbReference>
<dbReference type="GO" id="GO:0016829">
    <property type="term" value="F:lyase activity"/>
    <property type="evidence" value="ECO:0007669"/>
    <property type="project" value="UniProtKB-KW"/>
</dbReference>
<dbReference type="GO" id="GO:0003676">
    <property type="term" value="F:nucleic acid binding"/>
    <property type="evidence" value="ECO:0007669"/>
    <property type="project" value="InterPro"/>
</dbReference>
<dbReference type="GO" id="GO:0000213">
    <property type="term" value="F:tRNA-intron endonuclease activity"/>
    <property type="evidence" value="ECO:0007669"/>
    <property type="project" value="UniProtKB-UniRule"/>
</dbReference>
<dbReference type="GO" id="GO:0006388">
    <property type="term" value="P:tRNA splicing, via endonucleolytic cleavage and ligation"/>
    <property type="evidence" value="ECO:0007669"/>
    <property type="project" value="UniProtKB-UniRule"/>
</dbReference>
<dbReference type="CDD" id="cd22363">
    <property type="entry name" value="tRNA-intron_lyase_C"/>
    <property type="match status" value="1"/>
</dbReference>
<dbReference type="FunFam" id="3.40.1350.10:FF:000006">
    <property type="entry name" value="tRNA-splicing endonuclease"/>
    <property type="match status" value="1"/>
</dbReference>
<dbReference type="Gene3D" id="3.40.1350.10">
    <property type="match status" value="1"/>
</dbReference>
<dbReference type="Gene3D" id="3.40.1170.20">
    <property type="entry name" value="tRNA intron endonuclease, N-terminal domain"/>
    <property type="match status" value="1"/>
</dbReference>
<dbReference type="HAMAP" id="MF_01833">
    <property type="entry name" value="EndA_short"/>
    <property type="match status" value="1"/>
</dbReference>
<dbReference type="InterPro" id="IPR011856">
    <property type="entry name" value="tRNA_endonuc-like_dom_sf"/>
</dbReference>
<dbReference type="InterPro" id="IPR036167">
    <property type="entry name" value="tRNA_intron_Endo_cat-like_sf"/>
</dbReference>
<dbReference type="InterPro" id="IPR006677">
    <property type="entry name" value="tRNA_intron_Endonuc_cat-like"/>
</dbReference>
<dbReference type="InterPro" id="IPR006678">
    <property type="entry name" value="tRNA_intron_Endonuc_N"/>
</dbReference>
<dbReference type="InterPro" id="IPR036740">
    <property type="entry name" value="tRNA_intron_Endonuc_N_sf"/>
</dbReference>
<dbReference type="InterPro" id="IPR006676">
    <property type="entry name" value="tRNA_splic"/>
</dbReference>
<dbReference type="InterPro" id="IPR016442">
    <property type="entry name" value="tRNA_splic_arch_short"/>
</dbReference>
<dbReference type="NCBIfam" id="TIGR00324">
    <property type="entry name" value="endA"/>
    <property type="match status" value="1"/>
</dbReference>
<dbReference type="PANTHER" id="PTHR21227">
    <property type="entry name" value="TRNA-SPLICING ENDONUCLEASE SUBUNIT SEN2"/>
    <property type="match status" value="1"/>
</dbReference>
<dbReference type="PANTHER" id="PTHR21227:SF0">
    <property type="entry name" value="TRNA-SPLICING ENDONUCLEASE SUBUNIT SEN2"/>
    <property type="match status" value="1"/>
</dbReference>
<dbReference type="Pfam" id="PF01974">
    <property type="entry name" value="tRNA_int_endo"/>
    <property type="match status" value="1"/>
</dbReference>
<dbReference type="Pfam" id="PF02778">
    <property type="entry name" value="tRNA_int_endo_N"/>
    <property type="match status" value="1"/>
</dbReference>
<dbReference type="PIRSF" id="PIRSF005285">
    <property type="entry name" value="tRNA_splic_archaea"/>
    <property type="match status" value="1"/>
</dbReference>
<dbReference type="SUPFAM" id="SSF53032">
    <property type="entry name" value="tRNA-intron endonuclease catalytic domain-like"/>
    <property type="match status" value="1"/>
</dbReference>
<dbReference type="SUPFAM" id="SSF55267">
    <property type="entry name" value="tRNA-intron endonuclease N-terminal domain-like"/>
    <property type="match status" value="1"/>
</dbReference>
<feature type="chain" id="PRO_0000109475" description="tRNA-splicing endonuclease">
    <location>
        <begin position="1"/>
        <end position="170"/>
    </location>
</feature>
<feature type="active site" evidence="1">
    <location>
        <position position="110"/>
    </location>
</feature>
<feature type="active site" evidence="1">
    <location>
        <position position="116"/>
    </location>
</feature>
<feature type="active site" evidence="1">
    <location>
        <position position="147"/>
    </location>
</feature>
<gene>
    <name evidence="1" type="primary">endA</name>
    <name type="ordered locus">PYRAB16750</name>
    <name type="ORF">PAB1099</name>
</gene>
<name>ENDA_PYRAB</name>